<accession>B2UXS0</accession>
<proteinExistence type="inferred from homology"/>
<evidence type="ECO:0000255" key="1">
    <source>
        <dbReference type="HAMAP-Rule" id="MF_00534"/>
    </source>
</evidence>
<reference key="1">
    <citation type="submission" date="2008-05" db="EMBL/GenBank/DDBJ databases">
        <title>Complete genome sequence of Clostridium botulinum E3 str. Alaska E43.</title>
        <authorList>
            <person name="Brinkac L.M."/>
            <person name="Brown J.L."/>
            <person name="Bruce D."/>
            <person name="Detter C."/>
            <person name="Munk C."/>
            <person name="Smith L.A."/>
            <person name="Smith T.J."/>
            <person name="Sutton G."/>
            <person name="Brettin T.S."/>
        </authorList>
    </citation>
    <scope>NUCLEOTIDE SEQUENCE [LARGE SCALE GENOMIC DNA]</scope>
    <source>
        <strain>Alaska E43 / Type E3</strain>
    </source>
</reference>
<dbReference type="EC" id="6.1.1.22" evidence="1"/>
<dbReference type="EMBL" id="CP001078">
    <property type="protein sequence ID" value="ACD51460.1"/>
    <property type="molecule type" value="Genomic_DNA"/>
</dbReference>
<dbReference type="RefSeq" id="WP_012449817.1">
    <property type="nucleotide sequence ID" value="NC_010723.1"/>
</dbReference>
<dbReference type="SMR" id="B2UXS0"/>
<dbReference type="KEGG" id="cbt:CLH_0134"/>
<dbReference type="HOGENOM" id="CLU_004553_2_0_9"/>
<dbReference type="GO" id="GO:0005737">
    <property type="term" value="C:cytoplasm"/>
    <property type="evidence" value="ECO:0007669"/>
    <property type="project" value="UniProtKB-SubCell"/>
</dbReference>
<dbReference type="GO" id="GO:0004816">
    <property type="term" value="F:asparagine-tRNA ligase activity"/>
    <property type="evidence" value="ECO:0007669"/>
    <property type="project" value="UniProtKB-UniRule"/>
</dbReference>
<dbReference type="GO" id="GO:0005524">
    <property type="term" value="F:ATP binding"/>
    <property type="evidence" value="ECO:0007669"/>
    <property type="project" value="UniProtKB-UniRule"/>
</dbReference>
<dbReference type="GO" id="GO:0140096">
    <property type="term" value="F:catalytic activity, acting on a protein"/>
    <property type="evidence" value="ECO:0007669"/>
    <property type="project" value="UniProtKB-ARBA"/>
</dbReference>
<dbReference type="GO" id="GO:0003676">
    <property type="term" value="F:nucleic acid binding"/>
    <property type="evidence" value="ECO:0007669"/>
    <property type="project" value="InterPro"/>
</dbReference>
<dbReference type="GO" id="GO:0016740">
    <property type="term" value="F:transferase activity"/>
    <property type="evidence" value="ECO:0007669"/>
    <property type="project" value="UniProtKB-ARBA"/>
</dbReference>
<dbReference type="GO" id="GO:0006421">
    <property type="term" value="P:asparaginyl-tRNA aminoacylation"/>
    <property type="evidence" value="ECO:0007669"/>
    <property type="project" value="UniProtKB-UniRule"/>
</dbReference>
<dbReference type="CDD" id="cd00776">
    <property type="entry name" value="AsxRS_core"/>
    <property type="match status" value="1"/>
</dbReference>
<dbReference type="CDD" id="cd04318">
    <property type="entry name" value="EcAsnRS_like_N"/>
    <property type="match status" value="1"/>
</dbReference>
<dbReference type="FunFam" id="3.30.930.10:FF:000016">
    <property type="entry name" value="Asparagine--tRNA ligase"/>
    <property type="match status" value="1"/>
</dbReference>
<dbReference type="Gene3D" id="3.30.930.10">
    <property type="entry name" value="Bira Bifunctional Protein, Domain 2"/>
    <property type="match status" value="1"/>
</dbReference>
<dbReference type="Gene3D" id="2.40.50.140">
    <property type="entry name" value="Nucleic acid-binding proteins"/>
    <property type="match status" value="1"/>
</dbReference>
<dbReference type="HAMAP" id="MF_00534">
    <property type="entry name" value="Asn_tRNA_synth"/>
    <property type="match status" value="1"/>
</dbReference>
<dbReference type="InterPro" id="IPR004364">
    <property type="entry name" value="Aa-tRNA-synt_II"/>
</dbReference>
<dbReference type="InterPro" id="IPR006195">
    <property type="entry name" value="aa-tRNA-synth_II"/>
</dbReference>
<dbReference type="InterPro" id="IPR045864">
    <property type="entry name" value="aa-tRNA-synth_II/BPL/LPL"/>
</dbReference>
<dbReference type="InterPro" id="IPR004522">
    <property type="entry name" value="Asn-tRNA-ligase"/>
</dbReference>
<dbReference type="InterPro" id="IPR002312">
    <property type="entry name" value="Asp/Asn-tRNA-synth_IIb"/>
</dbReference>
<dbReference type="InterPro" id="IPR012340">
    <property type="entry name" value="NA-bd_OB-fold"/>
</dbReference>
<dbReference type="InterPro" id="IPR004365">
    <property type="entry name" value="NA-bd_OB_tRNA"/>
</dbReference>
<dbReference type="NCBIfam" id="TIGR00457">
    <property type="entry name" value="asnS"/>
    <property type="match status" value="1"/>
</dbReference>
<dbReference type="NCBIfam" id="NF003037">
    <property type="entry name" value="PRK03932.1"/>
    <property type="match status" value="1"/>
</dbReference>
<dbReference type="PANTHER" id="PTHR22594:SF34">
    <property type="entry name" value="ASPARAGINE--TRNA LIGASE, MITOCHONDRIAL-RELATED"/>
    <property type="match status" value="1"/>
</dbReference>
<dbReference type="PANTHER" id="PTHR22594">
    <property type="entry name" value="ASPARTYL/LYSYL-TRNA SYNTHETASE"/>
    <property type="match status" value="1"/>
</dbReference>
<dbReference type="Pfam" id="PF00152">
    <property type="entry name" value="tRNA-synt_2"/>
    <property type="match status" value="1"/>
</dbReference>
<dbReference type="Pfam" id="PF01336">
    <property type="entry name" value="tRNA_anti-codon"/>
    <property type="match status" value="1"/>
</dbReference>
<dbReference type="PRINTS" id="PR01042">
    <property type="entry name" value="TRNASYNTHASP"/>
</dbReference>
<dbReference type="SUPFAM" id="SSF55681">
    <property type="entry name" value="Class II aaRS and biotin synthetases"/>
    <property type="match status" value="1"/>
</dbReference>
<dbReference type="SUPFAM" id="SSF50249">
    <property type="entry name" value="Nucleic acid-binding proteins"/>
    <property type="match status" value="1"/>
</dbReference>
<dbReference type="PROSITE" id="PS50862">
    <property type="entry name" value="AA_TRNA_LIGASE_II"/>
    <property type="match status" value="1"/>
</dbReference>
<feature type="chain" id="PRO_1000128204" description="Asparagine--tRNA ligase">
    <location>
        <begin position="1"/>
        <end position="464"/>
    </location>
</feature>
<protein>
    <recommendedName>
        <fullName evidence="1">Asparagine--tRNA ligase</fullName>
        <ecNumber evidence="1">6.1.1.22</ecNumber>
    </recommendedName>
    <alternativeName>
        <fullName evidence="1">Asparaginyl-tRNA synthetase</fullName>
        <shortName evidence="1">AsnRS</shortName>
    </alternativeName>
</protein>
<name>SYN_CLOBA</name>
<gene>
    <name evidence="1" type="primary">asnS</name>
    <name type="ordered locus">CLH_0134</name>
</gene>
<sequence>MKNTVLIKKIYRETDQFLSKEVMISGWIRTLRASNAFGFIEINDGSFFKNIQVVFDDKLGNFKEISKLPISSSISVVGTLVATPDAKQPFEIQAKEIVIEGMSNSDYPLQKKRHTFEYLRSIAHLRPRSNAFSATFRVRSVAAFAIHKFFQEQGFVYTHTPIITGSDCEGAGEMFRVTTLDPKAPELTKEGNIDYTKDFFGKETNLTVSGQLNAECFALAFRNIYTFGPTFRAENSNTTRHAAEFWMIEPEIAFADLQDDMELAEAMLKYVIKYVMDECPEELQFFNSFVDKGLLERLNHVVSSDFAKVTYTEAVEILEKCDKEFDYDVSWGIDLQTEHERYLTEEHFKKPLFVTDYPKEIKAFYMRMNEDNKTVAATDLLVPGIGEIIGGSQREERLDVLEARMAELGLKKEDYWWYLELRKYGETKHAGFGLGFERLIMYITGMTNIRDVIPFPRTPGTSEF</sequence>
<comment type="catalytic activity">
    <reaction evidence="1">
        <text>tRNA(Asn) + L-asparagine + ATP = L-asparaginyl-tRNA(Asn) + AMP + diphosphate + H(+)</text>
        <dbReference type="Rhea" id="RHEA:11180"/>
        <dbReference type="Rhea" id="RHEA-COMP:9659"/>
        <dbReference type="Rhea" id="RHEA-COMP:9674"/>
        <dbReference type="ChEBI" id="CHEBI:15378"/>
        <dbReference type="ChEBI" id="CHEBI:30616"/>
        <dbReference type="ChEBI" id="CHEBI:33019"/>
        <dbReference type="ChEBI" id="CHEBI:58048"/>
        <dbReference type="ChEBI" id="CHEBI:78442"/>
        <dbReference type="ChEBI" id="CHEBI:78515"/>
        <dbReference type="ChEBI" id="CHEBI:456215"/>
        <dbReference type="EC" id="6.1.1.22"/>
    </reaction>
</comment>
<comment type="subunit">
    <text evidence="1">Homodimer.</text>
</comment>
<comment type="subcellular location">
    <subcellularLocation>
        <location evidence="1">Cytoplasm</location>
    </subcellularLocation>
</comment>
<comment type="similarity">
    <text evidence="1">Belongs to the class-II aminoacyl-tRNA synthetase family.</text>
</comment>
<organism>
    <name type="scientific">Clostridium botulinum (strain Alaska E43 / Type E3)</name>
    <dbReference type="NCBI Taxonomy" id="508767"/>
    <lineage>
        <taxon>Bacteria</taxon>
        <taxon>Bacillati</taxon>
        <taxon>Bacillota</taxon>
        <taxon>Clostridia</taxon>
        <taxon>Eubacteriales</taxon>
        <taxon>Clostridiaceae</taxon>
        <taxon>Clostridium</taxon>
    </lineage>
</organism>
<keyword id="KW-0030">Aminoacyl-tRNA synthetase</keyword>
<keyword id="KW-0067">ATP-binding</keyword>
<keyword id="KW-0963">Cytoplasm</keyword>
<keyword id="KW-0436">Ligase</keyword>
<keyword id="KW-0547">Nucleotide-binding</keyword>
<keyword id="KW-0648">Protein biosynthesis</keyword>